<reference key="1">
    <citation type="journal article" date="2008" name="Genome Res.">
        <title>Genome sequence of the beta-rhizobium Cupriavidus taiwanensis and comparative genomics of rhizobia.</title>
        <authorList>
            <person name="Amadou C."/>
            <person name="Pascal G."/>
            <person name="Mangenot S."/>
            <person name="Glew M."/>
            <person name="Bontemps C."/>
            <person name="Capela D."/>
            <person name="Carrere S."/>
            <person name="Cruveiller S."/>
            <person name="Dossat C."/>
            <person name="Lajus A."/>
            <person name="Marchetti M."/>
            <person name="Poinsot V."/>
            <person name="Rouy Z."/>
            <person name="Servin B."/>
            <person name="Saad M."/>
            <person name="Schenowitz C."/>
            <person name="Barbe V."/>
            <person name="Batut J."/>
            <person name="Medigue C."/>
            <person name="Masson-Boivin C."/>
        </authorList>
    </citation>
    <scope>NUCLEOTIDE SEQUENCE [LARGE SCALE GENOMIC DNA]</scope>
    <source>
        <strain>DSM 17343 / BCRC 17206 / CCUG 44338 / CIP 107171 / LMG 19424 / R1</strain>
    </source>
</reference>
<gene>
    <name evidence="1" type="primary">dnaK</name>
    <name type="ordered locus">RALTA_A2564</name>
</gene>
<feature type="chain" id="PRO_1000119695" description="Chaperone protein DnaK">
    <location>
        <begin position="1"/>
        <end position="647"/>
    </location>
</feature>
<feature type="region of interest" description="Disordered" evidence="2">
    <location>
        <begin position="611"/>
        <end position="647"/>
    </location>
</feature>
<feature type="compositionally biased region" description="Low complexity" evidence="2">
    <location>
        <begin position="611"/>
        <end position="631"/>
    </location>
</feature>
<feature type="compositionally biased region" description="Basic and acidic residues" evidence="2">
    <location>
        <begin position="638"/>
        <end position="647"/>
    </location>
</feature>
<feature type="modified residue" description="Phosphothreonine; by autocatalysis" evidence="1">
    <location>
        <position position="200"/>
    </location>
</feature>
<comment type="function">
    <text evidence="1">Acts as a chaperone.</text>
</comment>
<comment type="induction">
    <text evidence="1">By stress conditions e.g. heat shock.</text>
</comment>
<comment type="similarity">
    <text evidence="1">Belongs to the heat shock protein 70 family.</text>
</comment>
<name>DNAK_CUPTR</name>
<accession>B3R6G7</accession>
<proteinExistence type="inferred from homology"/>
<evidence type="ECO:0000255" key="1">
    <source>
        <dbReference type="HAMAP-Rule" id="MF_00332"/>
    </source>
</evidence>
<evidence type="ECO:0000256" key="2">
    <source>
        <dbReference type="SAM" id="MobiDB-lite"/>
    </source>
</evidence>
<sequence length="647" mass="69845">MGKIIGIDLGTTNSCVAILEGNTPKVIENSEGARTTPSIIAYMEDGEILVGAPAKRQAVTNPRNTLYAVKRLIGRKFEEKEVQKDIGLMPYSIVKADNGDAWVSVRDQKLAPPQVSAEVLRKMKKTAEDYLGEPVTEAVITVPAYFNDSQRQATKDAGRIAGLDVKRIINEPTAAALAFGLDKNEKGDRKIAVYDLGGGTFDISIIEIADVDGEKQFEVLSTNGDTFLGGEDFDQRIIDYIIGEFKKDQGVDLSKDVLALQRLKEAAEKAKIELSSSQQTEINLPYITADASGPKHLNLKMTRAKLESLVEELITRTIEPCRTAIKDAGVKVSDIDDVILVGGMTRMPKVQEQVKEFFGKEARKDVNPDEAVAVGAAIQGSVLSGDRKDVLLLDVTPLSLGIETLGGVMTKMITKNTTIPTKHAQVFSTADDNQPAVTIKVYQGEREMATGNKLLGEFNLEGIPPAPRGTPQIEVSFDIDANGILHVGAKDKATGKENRITIKANSGLSEDEIQRMVKDAEANAEEDKKARELADARNQADALIHSTRKAVTEYGDKLEAGEKEKIEAAIKELEDAARGGDKTEIDAKVNALSEASQKLGEKVYADMQAKAGEQGAAGAAGAGAQQQAQPQDDNVVDAEFKEVNDKK</sequence>
<dbReference type="EMBL" id="CU633749">
    <property type="protein sequence ID" value="CAQ70495.1"/>
    <property type="molecule type" value="Genomic_DNA"/>
</dbReference>
<dbReference type="RefSeq" id="WP_012353791.1">
    <property type="nucleotide sequence ID" value="NC_010528.1"/>
</dbReference>
<dbReference type="SMR" id="B3R6G7"/>
<dbReference type="GeneID" id="29763196"/>
<dbReference type="KEGG" id="cti:RALTA_A2564"/>
<dbReference type="eggNOG" id="COG0443">
    <property type="taxonomic scope" value="Bacteria"/>
</dbReference>
<dbReference type="HOGENOM" id="CLU_005965_2_1_4"/>
<dbReference type="BioCyc" id="CTAI977880:RALTA_RS12470-MONOMER"/>
<dbReference type="Proteomes" id="UP000001692">
    <property type="component" value="Chromosome 1"/>
</dbReference>
<dbReference type="GO" id="GO:0005524">
    <property type="term" value="F:ATP binding"/>
    <property type="evidence" value="ECO:0007669"/>
    <property type="project" value="UniProtKB-UniRule"/>
</dbReference>
<dbReference type="GO" id="GO:0140662">
    <property type="term" value="F:ATP-dependent protein folding chaperone"/>
    <property type="evidence" value="ECO:0007669"/>
    <property type="project" value="InterPro"/>
</dbReference>
<dbReference type="GO" id="GO:0051082">
    <property type="term" value="F:unfolded protein binding"/>
    <property type="evidence" value="ECO:0007669"/>
    <property type="project" value="InterPro"/>
</dbReference>
<dbReference type="CDD" id="cd10234">
    <property type="entry name" value="ASKHA_NBD_HSP70_DnaK-like"/>
    <property type="match status" value="1"/>
</dbReference>
<dbReference type="FunFam" id="2.60.34.10:FF:000014">
    <property type="entry name" value="Chaperone protein DnaK HSP70"/>
    <property type="match status" value="1"/>
</dbReference>
<dbReference type="FunFam" id="3.30.30.30:FF:000003">
    <property type="entry name" value="Heat shock protein 9"/>
    <property type="match status" value="1"/>
</dbReference>
<dbReference type="FunFam" id="1.20.1270.10:FF:000001">
    <property type="entry name" value="Molecular chaperone DnaK"/>
    <property type="match status" value="1"/>
</dbReference>
<dbReference type="FunFam" id="3.30.420.40:FF:000004">
    <property type="entry name" value="Molecular chaperone DnaK"/>
    <property type="match status" value="1"/>
</dbReference>
<dbReference type="FunFam" id="3.90.640.10:FF:000003">
    <property type="entry name" value="Molecular chaperone DnaK"/>
    <property type="match status" value="1"/>
</dbReference>
<dbReference type="Gene3D" id="1.20.1270.10">
    <property type="match status" value="1"/>
</dbReference>
<dbReference type="Gene3D" id="3.30.420.40">
    <property type="match status" value="2"/>
</dbReference>
<dbReference type="Gene3D" id="3.90.640.10">
    <property type="entry name" value="Actin, Chain A, domain 4"/>
    <property type="match status" value="1"/>
</dbReference>
<dbReference type="Gene3D" id="2.60.34.10">
    <property type="entry name" value="Substrate Binding Domain Of DNAk, Chain A, domain 1"/>
    <property type="match status" value="1"/>
</dbReference>
<dbReference type="HAMAP" id="MF_00332">
    <property type="entry name" value="DnaK"/>
    <property type="match status" value="1"/>
</dbReference>
<dbReference type="InterPro" id="IPR043129">
    <property type="entry name" value="ATPase_NBD"/>
</dbReference>
<dbReference type="InterPro" id="IPR012725">
    <property type="entry name" value="Chaperone_DnaK"/>
</dbReference>
<dbReference type="InterPro" id="IPR018181">
    <property type="entry name" value="Heat_shock_70_CS"/>
</dbReference>
<dbReference type="InterPro" id="IPR029048">
    <property type="entry name" value="HSP70_C_sf"/>
</dbReference>
<dbReference type="InterPro" id="IPR029047">
    <property type="entry name" value="HSP70_peptide-bd_sf"/>
</dbReference>
<dbReference type="InterPro" id="IPR013126">
    <property type="entry name" value="Hsp_70_fam"/>
</dbReference>
<dbReference type="NCBIfam" id="NF001413">
    <property type="entry name" value="PRK00290.1"/>
    <property type="match status" value="1"/>
</dbReference>
<dbReference type="NCBIfam" id="NF003520">
    <property type="entry name" value="PRK05183.1"/>
    <property type="match status" value="1"/>
</dbReference>
<dbReference type="NCBIfam" id="TIGR02350">
    <property type="entry name" value="prok_dnaK"/>
    <property type="match status" value="1"/>
</dbReference>
<dbReference type="PANTHER" id="PTHR19375">
    <property type="entry name" value="HEAT SHOCK PROTEIN 70KDA"/>
    <property type="match status" value="1"/>
</dbReference>
<dbReference type="Pfam" id="PF00012">
    <property type="entry name" value="HSP70"/>
    <property type="match status" value="1"/>
</dbReference>
<dbReference type="PRINTS" id="PR00301">
    <property type="entry name" value="HEATSHOCK70"/>
</dbReference>
<dbReference type="SUPFAM" id="SSF53067">
    <property type="entry name" value="Actin-like ATPase domain"/>
    <property type="match status" value="2"/>
</dbReference>
<dbReference type="SUPFAM" id="SSF100934">
    <property type="entry name" value="Heat shock protein 70kD (HSP70), C-terminal subdomain"/>
    <property type="match status" value="1"/>
</dbReference>
<dbReference type="SUPFAM" id="SSF100920">
    <property type="entry name" value="Heat shock protein 70kD (HSP70), peptide-binding domain"/>
    <property type="match status" value="1"/>
</dbReference>
<dbReference type="PROSITE" id="PS00297">
    <property type="entry name" value="HSP70_1"/>
    <property type="match status" value="1"/>
</dbReference>
<dbReference type="PROSITE" id="PS00329">
    <property type="entry name" value="HSP70_2"/>
    <property type="match status" value="1"/>
</dbReference>
<dbReference type="PROSITE" id="PS01036">
    <property type="entry name" value="HSP70_3"/>
    <property type="match status" value="1"/>
</dbReference>
<keyword id="KW-0067">ATP-binding</keyword>
<keyword id="KW-0143">Chaperone</keyword>
<keyword id="KW-0547">Nucleotide-binding</keyword>
<keyword id="KW-0597">Phosphoprotein</keyword>
<keyword id="KW-0346">Stress response</keyword>
<protein>
    <recommendedName>
        <fullName evidence="1">Chaperone protein DnaK</fullName>
    </recommendedName>
    <alternativeName>
        <fullName evidence="1">HSP70</fullName>
    </alternativeName>
    <alternativeName>
        <fullName evidence="1">Heat shock 70 kDa protein</fullName>
    </alternativeName>
    <alternativeName>
        <fullName evidence="1">Heat shock protein 70</fullName>
    </alternativeName>
</protein>
<organism>
    <name type="scientific">Cupriavidus taiwanensis (strain DSM 17343 / BCRC 17206 / CCUG 44338 / CIP 107171 / LMG 19424 / R1)</name>
    <name type="common">Ralstonia taiwanensis (strain LMG 19424)</name>
    <dbReference type="NCBI Taxonomy" id="977880"/>
    <lineage>
        <taxon>Bacteria</taxon>
        <taxon>Pseudomonadati</taxon>
        <taxon>Pseudomonadota</taxon>
        <taxon>Betaproteobacteria</taxon>
        <taxon>Burkholderiales</taxon>
        <taxon>Burkholderiaceae</taxon>
        <taxon>Cupriavidus</taxon>
    </lineage>
</organism>